<name>RL16_CROS5</name>
<keyword id="KW-1185">Reference proteome</keyword>
<keyword id="KW-0687">Ribonucleoprotein</keyword>
<keyword id="KW-0689">Ribosomal protein</keyword>
<keyword id="KW-0694">RNA-binding</keyword>
<keyword id="KW-0699">rRNA-binding</keyword>
<keyword id="KW-0820">tRNA-binding</keyword>
<organism>
    <name type="scientific">Crocosphaera subtropica (strain ATCC 51142 / BH68)</name>
    <name type="common">Cyanothece sp. (strain ATCC 51142)</name>
    <dbReference type="NCBI Taxonomy" id="43989"/>
    <lineage>
        <taxon>Bacteria</taxon>
        <taxon>Bacillati</taxon>
        <taxon>Cyanobacteriota</taxon>
        <taxon>Cyanophyceae</taxon>
        <taxon>Oscillatoriophycideae</taxon>
        <taxon>Chroococcales</taxon>
        <taxon>Aphanothecaceae</taxon>
        <taxon>Crocosphaera</taxon>
        <taxon>Crocosphaera subtropica</taxon>
    </lineage>
</organism>
<protein>
    <recommendedName>
        <fullName evidence="1">Large ribosomal subunit protein uL16</fullName>
    </recommendedName>
    <alternativeName>
        <fullName evidence="2">50S ribosomal protein L16</fullName>
    </alternativeName>
</protein>
<evidence type="ECO:0000255" key="1">
    <source>
        <dbReference type="HAMAP-Rule" id="MF_01342"/>
    </source>
</evidence>
<evidence type="ECO:0000305" key="2"/>
<sequence length="139" mass="15983">MLSPRRTKFRKQQRGRMRGLAHRGSTLNFGEYALQATEPSWITSRQIEAARRAMTRYIKRGGKIWIRVFPDKPVTMRAAETRMGSGKGSPEYWVAVVKPGRIMFELSGVAEPVAREAMRLAAQKLPIKTKFITRQEEYI</sequence>
<proteinExistence type="inferred from homology"/>
<feature type="chain" id="PRO_1000166352" description="Large ribosomal subunit protein uL16">
    <location>
        <begin position="1"/>
        <end position="139"/>
    </location>
</feature>
<accession>B1WQR7</accession>
<reference key="1">
    <citation type="journal article" date="2008" name="Proc. Natl. Acad. Sci. U.S.A.">
        <title>The genome of Cyanothece 51142, a unicellular diazotrophic cyanobacterium important in the marine nitrogen cycle.</title>
        <authorList>
            <person name="Welsh E.A."/>
            <person name="Liberton M."/>
            <person name="Stoeckel J."/>
            <person name="Loh T."/>
            <person name="Elvitigala T."/>
            <person name="Wang C."/>
            <person name="Wollam A."/>
            <person name="Fulton R.S."/>
            <person name="Clifton S.W."/>
            <person name="Jacobs J.M."/>
            <person name="Aurora R."/>
            <person name="Ghosh B.K."/>
            <person name="Sherman L.A."/>
            <person name="Smith R.D."/>
            <person name="Wilson R.K."/>
            <person name="Pakrasi H.B."/>
        </authorList>
    </citation>
    <scope>NUCLEOTIDE SEQUENCE [LARGE SCALE GENOMIC DNA]</scope>
    <source>
        <strain>ATCC 51142 / BH68</strain>
    </source>
</reference>
<comment type="function">
    <text evidence="1">Binds 23S rRNA and is also seen to make contacts with the A and possibly P site tRNAs.</text>
</comment>
<comment type="subunit">
    <text evidence="1">Part of the 50S ribosomal subunit.</text>
</comment>
<comment type="similarity">
    <text evidence="1">Belongs to the universal ribosomal protein uL16 family.</text>
</comment>
<dbReference type="EMBL" id="CP000806">
    <property type="protein sequence ID" value="ACB53369.1"/>
    <property type="molecule type" value="Genomic_DNA"/>
</dbReference>
<dbReference type="RefSeq" id="WP_009543889.1">
    <property type="nucleotide sequence ID" value="NC_010546.1"/>
</dbReference>
<dbReference type="SMR" id="B1WQR7"/>
<dbReference type="STRING" id="43989.cce_4021"/>
<dbReference type="KEGG" id="cyt:cce_4021"/>
<dbReference type="eggNOG" id="COG0197">
    <property type="taxonomic scope" value="Bacteria"/>
</dbReference>
<dbReference type="HOGENOM" id="CLU_078858_2_1_3"/>
<dbReference type="OrthoDB" id="9802589at2"/>
<dbReference type="Proteomes" id="UP000001203">
    <property type="component" value="Chromosome circular"/>
</dbReference>
<dbReference type="GO" id="GO:0022625">
    <property type="term" value="C:cytosolic large ribosomal subunit"/>
    <property type="evidence" value="ECO:0007669"/>
    <property type="project" value="TreeGrafter"/>
</dbReference>
<dbReference type="GO" id="GO:0019843">
    <property type="term" value="F:rRNA binding"/>
    <property type="evidence" value="ECO:0007669"/>
    <property type="project" value="UniProtKB-UniRule"/>
</dbReference>
<dbReference type="GO" id="GO:0003735">
    <property type="term" value="F:structural constituent of ribosome"/>
    <property type="evidence" value="ECO:0007669"/>
    <property type="project" value="InterPro"/>
</dbReference>
<dbReference type="GO" id="GO:0000049">
    <property type="term" value="F:tRNA binding"/>
    <property type="evidence" value="ECO:0007669"/>
    <property type="project" value="UniProtKB-KW"/>
</dbReference>
<dbReference type="GO" id="GO:0006412">
    <property type="term" value="P:translation"/>
    <property type="evidence" value="ECO:0007669"/>
    <property type="project" value="UniProtKB-UniRule"/>
</dbReference>
<dbReference type="CDD" id="cd01433">
    <property type="entry name" value="Ribosomal_L16_L10e"/>
    <property type="match status" value="1"/>
</dbReference>
<dbReference type="FunFam" id="3.90.1170.10:FF:000001">
    <property type="entry name" value="50S ribosomal protein L16"/>
    <property type="match status" value="1"/>
</dbReference>
<dbReference type="Gene3D" id="3.90.1170.10">
    <property type="entry name" value="Ribosomal protein L10e/L16"/>
    <property type="match status" value="1"/>
</dbReference>
<dbReference type="HAMAP" id="MF_01342">
    <property type="entry name" value="Ribosomal_uL16"/>
    <property type="match status" value="1"/>
</dbReference>
<dbReference type="InterPro" id="IPR047873">
    <property type="entry name" value="Ribosomal_uL16"/>
</dbReference>
<dbReference type="InterPro" id="IPR000114">
    <property type="entry name" value="Ribosomal_uL16_bact-type"/>
</dbReference>
<dbReference type="InterPro" id="IPR020798">
    <property type="entry name" value="Ribosomal_uL16_CS"/>
</dbReference>
<dbReference type="InterPro" id="IPR016180">
    <property type="entry name" value="Ribosomal_uL16_dom"/>
</dbReference>
<dbReference type="InterPro" id="IPR036920">
    <property type="entry name" value="Ribosomal_uL16_sf"/>
</dbReference>
<dbReference type="NCBIfam" id="TIGR01164">
    <property type="entry name" value="rplP_bact"/>
    <property type="match status" value="1"/>
</dbReference>
<dbReference type="PANTHER" id="PTHR12220">
    <property type="entry name" value="50S/60S RIBOSOMAL PROTEIN L16"/>
    <property type="match status" value="1"/>
</dbReference>
<dbReference type="PANTHER" id="PTHR12220:SF13">
    <property type="entry name" value="LARGE RIBOSOMAL SUBUNIT PROTEIN UL16M"/>
    <property type="match status" value="1"/>
</dbReference>
<dbReference type="Pfam" id="PF00252">
    <property type="entry name" value="Ribosomal_L16"/>
    <property type="match status" value="1"/>
</dbReference>
<dbReference type="PRINTS" id="PR00060">
    <property type="entry name" value="RIBOSOMALL16"/>
</dbReference>
<dbReference type="SUPFAM" id="SSF54686">
    <property type="entry name" value="Ribosomal protein L16p/L10e"/>
    <property type="match status" value="1"/>
</dbReference>
<dbReference type="PROSITE" id="PS00586">
    <property type="entry name" value="RIBOSOMAL_L16_1"/>
    <property type="match status" value="1"/>
</dbReference>
<dbReference type="PROSITE" id="PS00701">
    <property type="entry name" value="RIBOSOMAL_L16_2"/>
    <property type="match status" value="1"/>
</dbReference>
<gene>
    <name evidence="1" type="primary">rplP</name>
    <name evidence="1" type="synonym">rpl16</name>
    <name type="ordered locus">cce_4021</name>
</gene>